<feature type="chain" id="PRO_1000061703" description="Coenzyme PQQ synthesis protein A">
    <location>
        <begin position="1"/>
        <end position="24"/>
    </location>
</feature>
<feature type="cross-link" description="Pyrroloquinoline quinone (Glu-Tyr)" evidence="1">
    <location>
        <begin position="16"/>
        <end position="20"/>
    </location>
</feature>
<proteinExistence type="inferred from homology"/>
<keyword id="KW-0884">PQQ biosynthesis</keyword>
<organism>
    <name type="scientific">Pseudomonas syringae pv. syringae (strain B728a)</name>
    <dbReference type="NCBI Taxonomy" id="205918"/>
    <lineage>
        <taxon>Bacteria</taxon>
        <taxon>Pseudomonadati</taxon>
        <taxon>Pseudomonadota</taxon>
        <taxon>Gammaproteobacteria</taxon>
        <taxon>Pseudomonadales</taxon>
        <taxon>Pseudomonadaceae</taxon>
        <taxon>Pseudomonas</taxon>
        <taxon>Pseudomonas syringae</taxon>
    </lineage>
</organism>
<evidence type="ECO:0000255" key="1">
    <source>
        <dbReference type="HAMAP-Rule" id="MF_00656"/>
    </source>
</evidence>
<gene>
    <name evidence="1" type="primary">pqqA</name>
    <name type="ordered locus">Psyr_4670</name>
</gene>
<protein>
    <recommendedName>
        <fullName evidence="1">Coenzyme PQQ synthesis protein A</fullName>
    </recommendedName>
    <alternativeName>
        <fullName evidence="1">Pyrroloquinoline quinone biosynthesis protein A</fullName>
    </alternativeName>
</protein>
<dbReference type="EMBL" id="CP000075">
    <property type="protein sequence ID" value="AAY39697.1"/>
    <property type="molecule type" value="Genomic_DNA"/>
</dbReference>
<dbReference type="RefSeq" id="WP_003422658.1">
    <property type="nucleotide sequence ID" value="NC_007005.1"/>
</dbReference>
<dbReference type="RefSeq" id="YP_237735.1">
    <property type="nucleotide sequence ID" value="NC_007005.1"/>
</dbReference>
<dbReference type="STRING" id="205918.Psyr_4670"/>
<dbReference type="GeneID" id="97252069"/>
<dbReference type="KEGG" id="psb:Psyr_4670"/>
<dbReference type="eggNOG" id="ENOG5031JH1">
    <property type="taxonomic scope" value="Bacteria"/>
</dbReference>
<dbReference type="HOGENOM" id="CLU_219131_0_0_6"/>
<dbReference type="UniPathway" id="UPA00539"/>
<dbReference type="Proteomes" id="UP000000426">
    <property type="component" value="Chromosome"/>
</dbReference>
<dbReference type="GO" id="GO:0018189">
    <property type="term" value="P:pyrroloquinoline quinone biosynthetic process"/>
    <property type="evidence" value="ECO:0007669"/>
    <property type="project" value="UniProtKB-UniRule"/>
</dbReference>
<dbReference type="HAMAP" id="MF_00656">
    <property type="entry name" value="PQQ_syn_PqqA"/>
    <property type="match status" value="1"/>
</dbReference>
<dbReference type="InterPro" id="IPR011725">
    <property type="entry name" value="PQQ_synth_PqqA"/>
</dbReference>
<dbReference type="NCBIfam" id="TIGR02107">
    <property type="entry name" value="PQQ_syn_pqqA"/>
    <property type="match status" value="1"/>
</dbReference>
<dbReference type="Pfam" id="PF08042">
    <property type="entry name" value="PqqA"/>
    <property type="match status" value="1"/>
</dbReference>
<comment type="function">
    <text evidence="1">Required for coenzyme pyrroloquinoline quinone (PQQ) biosynthesis. PQQ is probably formed by cross-linking a specific glutamate to a specific tyrosine residue and excising these residues from the peptide.</text>
</comment>
<comment type="pathway">
    <text evidence="1">Cofactor biosynthesis; pyrroloquinoline quinone biosynthesis.</text>
</comment>
<comment type="similarity">
    <text evidence="1">Belongs to the PqqA family.</text>
</comment>
<sequence length="24" mass="2871">MSWTKPAYTDLRIGFEVTMYFASR</sequence>
<accession>Q4ZMC5</accession>
<name>PQQA_PSEU2</name>
<reference key="1">
    <citation type="journal article" date="2005" name="Proc. Natl. Acad. Sci. U.S.A.">
        <title>Comparison of the complete genome sequences of Pseudomonas syringae pv. syringae B728a and pv. tomato DC3000.</title>
        <authorList>
            <person name="Feil H."/>
            <person name="Feil W.S."/>
            <person name="Chain P."/>
            <person name="Larimer F."/>
            <person name="Dibartolo G."/>
            <person name="Copeland A."/>
            <person name="Lykidis A."/>
            <person name="Trong S."/>
            <person name="Nolan M."/>
            <person name="Goltsman E."/>
            <person name="Thiel J."/>
            <person name="Malfatti S."/>
            <person name="Loper J.E."/>
            <person name="Lapidus A."/>
            <person name="Detter J.C."/>
            <person name="Land M."/>
            <person name="Richardson P.M."/>
            <person name="Kyrpides N.C."/>
            <person name="Ivanova N."/>
            <person name="Lindow S.E."/>
        </authorList>
    </citation>
    <scope>NUCLEOTIDE SEQUENCE [LARGE SCALE GENOMIC DNA]</scope>
    <source>
        <strain>B728a</strain>
    </source>
</reference>